<sequence>MSMPFYVSPEQLMKDRADYARKGIARGRSVVVAAYDGGIAFATENPSRALHKISEIYDRIAFAAVGKYNEFENLRVAGVRYADLRGYSYDRSDVDARGLANAYAQTLGTVFTTESKPLEVEIVVAQVGATAHDDQIYRLSYDGSVADEHGFVVMGGEAEQLGTAMTERWRPGLTLSEVLRLVREVLAGPPVDGSPREIPATHLEVAVLDRTRPRRAFRRVAGPVLDDLLASPAGTSGPTGEPGPAGTAATDGGDL</sequence>
<organism>
    <name type="scientific">Sanguibacter keddieii (strain ATCC 51767 / DSM 10542 / NCFB 3025 / ST-74)</name>
    <dbReference type="NCBI Taxonomy" id="446469"/>
    <lineage>
        <taxon>Bacteria</taxon>
        <taxon>Bacillati</taxon>
        <taxon>Actinomycetota</taxon>
        <taxon>Actinomycetes</taxon>
        <taxon>Micrococcales</taxon>
        <taxon>Sanguibacteraceae</taxon>
        <taxon>Sanguibacter</taxon>
    </lineage>
</organism>
<feature type="chain" id="PRO_0000397174" description="Proteasome subunit alpha">
    <location>
        <begin position="1"/>
        <end position="255"/>
    </location>
</feature>
<feature type="region of interest" description="Disordered" evidence="2">
    <location>
        <begin position="228"/>
        <end position="255"/>
    </location>
</feature>
<feature type="compositionally biased region" description="Low complexity" evidence="2">
    <location>
        <begin position="232"/>
        <end position="255"/>
    </location>
</feature>
<dbReference type="EMBL" id="CP001819">
    <property type="protein sequence ID" value="ACZ22008.1"/>
    <property type="molecule type" value="Genomic_DNA"/>
</dbReference>
<dbReference type="RefSeq" id="WP_012867077.1">
    <property type="nucleotide sequence ID" value="NC_013521.1"/>
</dbReference>
<dbReference type="SMR" id="D1BHT8"/>
<dbReference type="STRING" id="446469.Sked_20860"/>
<dbReference type="MEROPS" id="T01.980"/>
<dbReference type="KEGG" id="ske:Sked_20860"/>
<dbReference type="eggNOG" id="COG0638">
    <property type="taxonomic scope" value="Bacteria"/>
</dbReference>
<dbReference type="HOGENOM" id="CLU_071031_0_0_11"/>
<dbReference type="OrthoDB" id="9775643at2"/>
<dbReference type="UniPathway" id="UPA00997"/>
<dbReference type="Proteomes" id="UP000000322">
    <property type="component" value="Chromosome"/>
</dbReference>
<dbReference type="GO" id="GO:0005737">
    <property type="term" value="C:cytoplasm"/>
    <property type="evidence" value="ECO:0007669"/>
    <property type="project" value="UniProtKB-SubCell"/>
</dbReference>
<dbReference type="GO" id="GO:0019773">
    <property type="term" value="C:proteasome core complex, alpha-subunit complex"/>
    <property type="evidence" value="ECO:0007669"/>
    <property type="project" value="UniProtKB-UniRule"/>
</dbReference>
<dbReference type="GO" id="GO:0004298">
    <property type="term" value="F:threonine-type endopeptidase activity"/>
    <property type="evidence" value="ECO:0007669"/>
    <property type="project" value="InterPro"/>
</dbReference>
<dbReference type="GO" id="GO:0019941">
    <property type="term" value="P:modification-dependent protein catabolic process"/>
    <property type="evidence" value="ECO:0007669"/>
    <property type="project" value="UniProtKB-UniRule"/>
</dbReference>
<dbReference type="GO" id="GO:0010498">
    <property type="term" value="P:proteasomal protein catabolic process"/>
    <property type="evidence" value="ECO:0007669"/>
    <property type="project" value="UniProtKB-UniRule"/>
</dbReference>
<dbReference type="CDD" id="cd01906">
    <property type="entry name" value="proteasome_protease_HslV"/>
    <property type="match status" value="1"/>
</dbReference>
<dbReference type="Gene3D" id="3.60.20.10">
    <property type="entry name" value="Glutamine Phosphoribosylpyrophosphate, subunit 1, domain 1"/>
    <property type="match status" value="1"/>
</dbReference>
<dbReference type="HAMAP" id="MF_00289_B">
    <property type="entry name" value="Proteasome_A_B"/>
    <property type="match status" value="1"/>
</dbReference>
<dbReference type="InterPro" id="IPR029055">
    <property type="entry name" value="Ntn_hydrolases_N"/>
</dbReference>
<dbReference type="InterPro" id="IPR023332">
    <property type="entry name" value="Proteasome_alpha-type"/>
</dbReference>
<dbReference type="InterPro" id="IPR022296">
    <property type="entry name" value="Proteasome_asu_bac"/>
</dbReference>
<dbReference type="InterPro" id="IPR001353">
    <property type="entry name" value="Proteasome_sua/b"/>
</dbReference>
<dbReference type="NCBIfam" id="TIGR03691">
    <property type="entry name" value="20S_bact_alpha"/>
    <property type="match status" value="1"/>
</dbReference>
<dbReference type="Pfam" id="PF00227">
    <property type="entry name" value="Proteasome"/>
    <property type="match status" value="1"/>
</dbReference>
<dbReference type="SUPFAM" id="SSF56235">
    <property type="entry name" value="N-terminal nucleophile aminohydrolases (Ntn hydrolases)"/>
    <property type="match status" value="1"/>
</dbReference>
<dbReference type="PROSITE" id="PS51475">
    <property type="entry name" value="PROTEASOME_ALPHA_2"/>
    <property type="match status" value="1"/>
</dbReference>
<keyword id="KW-0963">Cytoplasm</keyword>
<keyword id="KW-0647">Proteasome</keyword>
<protein>
    <recommendedName>
        <fullName evidence="1">Proteasome subunit alpha</fullName>
    </recommendedName>
    <alternativeName>
        <fullName evidence="1">20S proteasome alpha subunit</fullName>
    </alternativeName>
    <alternativeName>
        <fullName evidence="1">Proteasome core protein PrcA</fullName>
    </alternativeName>
</protein>
<comment type="function">
    <text evidence="1">Component of the proteasome core, a large protease complex with broad specificity involved in protein degradation.</text>
</comment>
<comment type="activity regulation">
    <text evidence="1">The formation of the proteasomal ATPase ARC-20S proteasome complex, likely via the docking of the C-termini of ARC into the intersubunit pockets in the alpha-rings, may trigger opening of the gate for substrate entry. Interconversion between the open-gate and close-gate conformations leads to a dynamic regulation of the 20S proteasome proteolysis activity.</text>
</comment>
<comment type="pathway">
    <text evidence="1">Protein degradation; proteasomal Pup-dependent pathway.</text>
</comment>
<comment type="subunit">
    <text evidence="1">The 20S proteasome core is composed of 14 alpha and 14 beta subunits that assemble into four stacked heptameric rings, resulting in a barrel-shaped structure. The two inner rings, each composed of seven catalytic beta subunits, are sandwiched by two outer rings, each composed of seven alpha subunits. The catalytic chamber with the active sites is on the inside of the barrel. Has a gated structure, the ends of the cylinder being occluded by the N-termini of the alpha-subunits. Is capped by the proteasome-associated ATPase, ARC.</text>
</comment>
<comment type="subcellular location">
    <subcellularLocation>
        <location evidence="1">Cytoplasm</location>
    </subcellularLocation>
</comment>
<comment type="similarity">
    <text evidence="1">Belongs to the peptidase T1A family.</text>
</comment>
<gene>
    <name evidence="1" type="primary">prcA</name>
    <name type="ordered locus">Sked_20860</name>
</gene>
<accession>D1BHT8</accession>
<name>PSA_SANKS</name>
<evidence type="ECO:0000255" key="1">
    <source>
        <dbReference type="HAMAP-Rule" id="MF_00289"/>
    </source>
</evidence>
<evidence type="ECO:0000256" key="2">
    <source>
        <dbReference type="SAM" id="MobiDB-lite"/>
    </source>
</evidence>
<reference key="1">
    <citation type="journal article" date="2009" name="Stand. Genomic Sci.">
        <title>Complete genome sequence of Sanguibacter keddieii type strain (ST-74).</title>
        <authorList>
            <person name="Ivanova N."/>
            <person name="Sikorski J."/>
            <person name="Sims D."/>
            <person name="Brettin T."/>
            <person name="Detter J.C."/>
            <person name="Han C."/>
            <person name="Lapidus A."/>
            <person name="Copeland A."/>
            <person name="Glavina Del Rio T."/>
            <person name="Nolan M."/>
            <person name="Chen F."/>
            <person name="Lucas S."/>
            <person name="Tice H."/>
            <person name="Cheng J.F."/>
            <person name="Bruce D."/>
            <person name="Goodwin L."/>
            <person name="Pitluck S."/>
            <person name="Pati A."/>
            <person name="Mavromatis K."/>
            <person name="Chen A."/>
            <person name="Palaniappan K."/>
            <person name="D'haeseleer P."/>
            <person name="Chain P."/>
            <person name="Bristow J."/>
            <person name="Eisen J.A."/>
            <person name="Markowitz V."/>
            <person name="Hugenholtz P."/>
            <person name="Goker M."/>
            <person name="Pukall R."/>
            <person name="Klenk H.P."/>
            <person name="Kyrpides N.C."/>
        </authorList>
    </citation>
    <scope>NUCLEOTIDE SEQUENCE [LARGE SCALE GENOMIC DNA]</scope>
    <source>
        <strain>ATCC 51767 / DSM 10542 / NCFB 3025 / ST-74</strain>
    </source>
</reference>
<proteinExistence type="inferred from homology"/>